<reference key="1">
    <citation type="journal article" date="2005" name="Nature">
        <title>Sequencing of Aspergillus nidulans and comparative analysis with A. fumigatus and A. oryzae.</title>
        <authorList>
            <person name="Galagan J.E."/>
            <person name="Calvo S.E."/>
            <person name="Cuomo C."/>
            <person name="Ma L.-J."/>
            <person name="Wortman J.R."/>
            <person name="Batzoglou S."/>
            <person name="Lee S.-I."/>
            <person name="Bastuerkmen M."/>
            <person name="Spevak C.C."/>
            <person name="Clutterbuck J."/>
            <person name="Kapitonov V."/>
            <person name="Jurka J."/>
            <person name="Scazzocchio C."/>
            <person name="Farman M.L."/>
            <person name="Butler J."/>
            <person name="Purcell S."/>
            <person name="Harris S."/>
            <person name="Braus G.H."/>
            <person name="Draht O."/>
            <person name="Busch S."/>
            <person name="D'Enfert C."/>
            <person name="Bouchier C."/>
            <person name="Goldman G.H."/>
            <person name="Bell-Pedersen D."/>
            <person name="Griffiths-Jones S."/>
            <person name="Doonan J.H."/>
            <person name="Yu J."/>
            <person name="Vienken K."/>
            <person name="Pain A."/>
            <person name="Freitag M."/>
            <person name="Selker E.U."/>
            <person name="Archer D.B."/>
            <person name="Penalva M.A."/>
            <person name="Oakley B.R."/>
            <person name="Momany M."/>
            <person name="Tanaka T."/>
            <person name="Kumagai T."/>
            <person name="Asai K."/>
            <person name="Machida M."/>
            <person name="Nierman W.C."/>
            <person name="Denning D.W."/>
            <person name="Caddick M.X."/>
            <person name="Hynes M."/>
            <person name="Paoletti M."/>
            <person name="Fischer R."/>
            <person name="Miller B.L."/>
            <person name="Dyer P.S."/>
            <person name="Sachs M.S."/>
            <person name="Osmani S.A."/>
            <person name="Birren B.W."/>
        </authorList>
    </citation>
    <scope>NUCLEOTIDE SEQUENCE [LARGE SCALE GENOMIC DNA]</scope>
    <source>
        <strain>FGSC A4 / ATCC 38163 / CBS 112.46 / NRRL 194 / M139</strain>
    </source>
</reference>
<reference key="2">
    <citation type="journal article" date="2009" name="Fungal Genet. Biol.">
        <title>The 2008 update of the Aspergillus nidulans genome annotation: a community effort.</title>
        <authorList>
            <person name="Wortman J.R."/>
            <person name="Gilsenan J.M."/>
            <person name="Joardar V."/>
            <person name="Deegan J."/>
            <person name="Clutterbuck J."/>
            <person name="Andersen M.R."/>
            <person name="Archer D."/>
            <person name="Bencina M."/>
            <person name="Braus G."/>
            <person name="Coutinho P."/>
            <person name="von Dohren H."/>
            <person name="Doonan J."/>
            <person name="Driessen A.J."/>
            <person name="Durek P."/>
            <person name="Espeso E."/>
            <person name="Fekete E."/>
            <person name="Flipphi M."/>
            <person name="Estrada C.G."/>
            <person name="Geysens S."/>
            <person name="Goldman G."/>
            <person name="de Groot P.W."/>
            <person name="Hansen K."/>
            <person name="Harris S.D."/>
            <person name="Heinekamp T."/>
            <person name="Helmstaedt K."/>
            <person name="Henrissat B."/>
            <person name="Hofmann G."/>
            <person name="Homan T."/>
            <person name="Horio T."/>
            <person name="Horiuchi H."/>
            <person name="James S."/>
            <person name="Jones M."/>
            <person name="Karaffa L."/>
            <person name="Karanyi Z."/>
            <person name="Kato M."/>
            <person name="Keller N."/>
            <person name="Kelly D.E."/>
            <person name="Kiel J.A."/>
            <person name="Kim J.M."/>
            <person name="van der Klei I.J."/>
            <person name="Klis F.M."/>
            <person name="Kovalchuk A."/>
            <person name="Krasevec N."/>
            <person name="Kubicek C.P."/>
            <person name="Liu B."/>
            <person name="Maccabe A."/>
            <person name="Meyer V."/>
            <person name="Mirabito P."/>
            <person name="Miskei M."/>
            <person name="Mos M."/>
            <person name="Mullins J."/>
            <person name="Nelson D.R."/>
            <person name="Nielsen J."/>
            <person name="Oakley B.R."/>
            <person name="Osmani S.A."/>
            <person name="Pakula T."/>
            <person name="Paszewski A."/>
            <person name="Paulsen I."/>
            <person name="Pilsyk S."/>
            <person name="Pocsi I."/>
            <person name="Punt P.J."/>
            <person name="Ram A.F."/>
            <person name="Ren Q."/>
            <person name="Robellet X."/>
            <person name="Robson G."/>
            <person name="Seiboth B."/>
            <person name="van Solingen P."/>
            <person name="Specht T."/>
            <person name="Sun J."/>
            <person name="Taheri-Talesh N."/>
            <person name="Takeshita N."/>
            <person name="Ussery D."/>
            <person name="vanKuyk P.A."/>
            <person name="Visser H."/>
            <person name="van de Vondervoort P.J."/>
            <person name="de Vries R.P."/>
            <person name="Walton J."/>
            <person name="Xiang X."/>
            <person name="Xiong Y."/>
            <person name="Zeng A.P."/>
            <person name="Brandt B.W."/>
            <person name="Cornell M.J."/>
            <person name="van den Hondel C.A."/>
            <person name="Visser J."/>
            <person name="Oliver S.G."/>
            <person name="Turner G."/>
        </authorList>
    </citation>
    <scope>GENOME REANNOTATION</scope>
    <source>
        <strain>FGSC A4 / ATCC 38163 / CBS 112.46 / NRRL 194 / M139</strain>
    </source>
</reference>
<accession>Q5BH58</accession>
<accession>C8VQK2</accession>
<proteinExistence type="inferred from homology"/>
<feature type="chain" id="PRO_0000395794" description="Lon protease homolog 2, peroxisomal">
    <location>
        <begin position="1"/>
        <end position="932"/>
    </location>
</feature>
<feature type="domain" description="Lon N-terminal" evidence="3">
    <location>
        <begin position="11"/>
        <end position="260"/>
    </location>
</feature>
<feature type="domain" description="Lon proteolytic" evidence="2">
    <location>
        <begin position="729"/>
        <end position="916"/>
    </location>
</feature>
<feature type="region of interest" description="Disordered" evidence="4">
    <location>
        <begin position="298"/>
        <end position="328"/>
    </location>
</feature>
<feature type="short sequence motif" description="Microbody targeting signal" evidence="1">
    <location>
        <begin position="930"/>
        <end position="932"/>
    </location>
</feature>
<feature type="compositionally biased region" description="Basic and acidic residues" evidence="4">
    <location>
        <begin position="317"/>
        <end position="328"/>
    </location>
</feature>
<feature type="active site" evidence="1">
    <location>
        <position position="822"/>
    </location>
</feature>
<feature type="active site" evidence="1">
    <location>
        <position position="865"/>
    </location>
</feature>
<feature type="binding site" evidence="1">
    <location>
        <begin position="486"/>
        <end position="493"/>
    </location>
    <ligand>
        <name>ATP</name>
        <dbReference type="ChEBI" id="CHEBI:30616"/>
    </ligand>
</feature>
<protein>
    <recommendedName>
        <fullName evidence="1">Lon protease homolog 2, peroxisomal</fullName>
        <ecNumber evidence="1">3.4.21.53</ecNumber>
    </recommendedName>
</protein>
<keyword id="KW-0067">ATP-binding</keyword>
<keyword id="KW-0378">Hydrolase</keyword>
<keyword id="KW-0547">Nucleotide-binding</keyword>
<keyword id="KW-0576">Peroxisome</keyword>
<keyword id="KW-0645">Protease</keyword>
<keyword id="KW-1185">Reference proteome</keyword>
<keyword id="KW-0720">Serine protease</keyword>
<gene>
    <name type="ORF">AN0122</name>
</gene>
<sequence>MGTNGGRPTKLSLVPLPKGSVLLPGATLRIPVSNRPDLANLLSSLLDRTNAIRRDANSITFGCVPLCSPYLSKDGQHVIDNGTVDEDKKEEFESLEAGQARKEDLYRYGTLGKVIGVQRRAYSEPHLLVQGVQRLTVRRVLRERPFFEAECILHDEKETPLNDRETAELFQQLRQLSRELLTLLRYTSLIPNTGGPRLSPLIARKFELIITKSDLAQAGRLADVMADIAESGLEDKLRVLAAFDVKTRLERVVDILNKQNQIIRGSVKFTTISTDNIPPASVLDISQIDPRIRDLLSRRGIPGASGTPPPGLGGRNNEADEKESNELDELQQRLKDAQLSPEAQKVADKEMRRLRKMMPVNQEYGVIRTYLENLADIPWTKVTEDKLGPETLKAARKQLDDDHYGLEKIKKRLLEYLAVLRLKQSTNQGLEQQISILTKELDNSGGDIEKDIPSLPESDRAAIESKLNALTSKRTVDKSPILLLVGPPGTGKTSLARSVATALGRKFHRISLGGVRDEAEIRGHRRTYVAAMPGVIVNGLKKVGVANPVFLLDEIDKIGGPNFQGDPSAAMLEVLDPEQNHTFVDHYINIPIDLSKVLFIATANSLDTIPAPLLDRMETIQLSGYTTVEKRHIAKRHLLPKQIRANGLSDGQVVLSDDVIDKTTTSYTRESGVRNLERELGSICRYKAVQFADATDSAKLESYNPVVTVDDLEEILGIERFDEEIAEKHGRPGVVTGLVAYSTGGQGSILFIEVADMPGSGRVQLTGKLGDVLKESVEVALTWVKAHSFELGLTSDPNEDIMKNRSLHVHCPSGAIPKDGPSAGLAHTIGLISLFSGKAVPPKLAMTGEVSLRGRVMPVGGIKEKLIGALRAGVTTVLLPHQNRKDVKDVPEEVSNGLEIIYVKHIWEAIRHIWPDAHWPGQHHMDFVESRL</sequence>
<name>LONP2_EMENI</name>
<organism>
    <name type="scientific">Emericella nidulans (strain FGSC A4 / ATCC 38163 / CBS 112.46 / NRRL 194 / M139)</name>
    <name type="common">Aspergillus nidulans</name>
    <dbReference type="NCBI Taxonomy" id="227321"/>
    <lineage>
        <taxon>Eukaryota</taxon>
        <taxon>Fungi</taxon>
        <taxon>Dikarya</taxon>
        <taxon>Ascomycota</taxon>
        <taxon>Pezizomycotina</taxon>
        <taxon>Eurotiomycetes</taxon>
        <taxon>Eurotiomycetidae</taxon>
        <taxon>Eurotiales</taxon>
        <taxon>Aspergillaceae</taxon>
        <taxon>Aspergillus</taxon>
        <taxon>Aspergillus subgen. Nidulantes</taxon>
    </lineage>
</organism>
<comment type="function">
    <text evidence="1">ATP-dependent serine protease that mediates the selective degradation of misfolded and unassembled polypeptides in the peroxisomal matrix. Necessary for type 2 peroxisome targeting signal (PTS2)-containing protein processing and facilitates peroxisome matrix protein import.</text>
</comment>
<comment type="catalytic activity">
    <reaction evidence="1">
        <text>Hydrolysis of proteins in presence of ATP.</text>
        <dbReference type="EC" id="3.4.21.53"/>
    </reaction>
</comment>
<comment type="subcellular location">
    <subcellularLocation>
        <location evidence="1">Peroxisome matrix</location>
    </subcellularLocation>
</comment>
<comment type="similarity">
    <text evidence="1">Belongs to the peptidase S16 family.</text>
</comment>
<evidence type="ECO:0000255" key="1">
    <source>
        <dbReference type="HAMAP-Rule" id="MF_03121"/>
    </source>
</evidence>
<evidence type="ECO:0000255" key="2">
    <source>
        <dbReference type="PROSITE-ProRule" id="PRU01122"/>
    </source>
</evidence>
<evidence type="ECO:0000255" key="3">
    <source>
        <dbReference type="PROSITE-ProRule" id="PRU01123"/>
    </source>
</evidence>
<evidence type="ECO:0000256" key="4">
    <source>
        <dbReference type="SAM" id="MobiDB-lite"/>
    </source>
</evidence>
<dbReference type="EC" id="3.4.21.53" evidence="1"/>
<dbReference type="EMBL" id="AACD01000004">
    <property type="protein sequence ID" value="EAA65300.1"/>
    <property type="molecule type" value="Genomic_DNA"/>
</dbReference>
<dbReference type="EMBL" id="BN001308">
    <property type="protein sequence ID" value="CBF90156.1"/>
    <property type="molecule type" value="Genomic_DNA"/>
</dbReference>
<dbReference type="RefSeq" id="XP_657726.1">
    <property type="nucleotide sequence ID" value="XM_652634.1"/>
</dbReference>
<dbReference type="SMR" id="Q5BH58"/>
<dbReference type="STRING" id="227321.Q5BH58"/>
<dbReference type="EnsemblFungi" id="CBF90156">
    <property type="protein sequence ID" value="CBF90156"/>
    <property type="gene ID" value="ANIA_00122"/>
</dbReference>
<dbReference type="KEGG" id="ani:ANIA_00122"/>
<dbReference type="eggNOG" id="KOG2004">
    <property type="taxonomic scope" value="Eukaryota"/>
</dbReference>
<dbReference type="HOGENOM" id="CLU_004109_4_0_1"/>
<dbReference type="InParanoid" id="Q5BH58"/>
<dbReference type="OMA" id="MPMNQEY"/>
<dbReference type="OrthoDB" id="2411602at2759"/>
<dbReference type="Proteomes" id="UP000000560">
    <property type="component" value="Chromosome VIII"/>
</dbReference>
<dbReference type="GO" id="GO:0005782">
    <property type="term" value="C:peroxisomal matrix"/>
    <property type="evidence" value="ECO:0000318"/>
    <property type="project" value="GO_Central"/>
</dbReference>
<dbReference type="GO" id="GO:0005524">
    <property type="term" value="F:ATP binding"/>
    <property type="evidence" value="ECO:0007669"/>
    <property type="project" value="UniProtKB-UniRule"/>
</dbReference>
<dbReference type="GO" id="GO:0016887">
    <property type="term" value="F:ATP hydrolysis activity"/>
    <property type="evidence" value="ECO:0007669"/>
    <property type="project" value="UniProtKB-UniRule"/>
</dbReference>
<dbReference type="GO" id="GO:0004176">
    <property type="term" value="F:ATP-dependent peptidase activity"/>
    <property type="evidence" value="ECO:0007669"/>
    <property type="project" value="UniProtKB-UniRule"/>
</dbReference>
<dbReference type="GO" id="GO:0004252">
    <property type="term" value="F:serine-type endopeptidase activity"/>
    <property type="evidence" value="ECO:0007669"/>
    <property type="project" value="UniProtKB-UniRule"/>
</dbReference>
<dbReference type="GO" id="GO:0016558">
    <property type="term" value="P:protein import into peroxisome matrix"/>
    <property type="evidence" value="ECO:0007669"/>
    <property type="project" value="UniProtKB-UniRule"/>
</dbReference>
<dbReference type="GO" id="GO:0016485">
    <property type="term" value="P:protein processing"/>
    <property type="evidence" value="ECO:0000318"/>
    <property type="project" value="GO_Central"/>
</dbReference>
<dbReference type="GO" id="GO:0006515">
    <property type="term" value="P:protein quality control for misfolded or incompletely synthesized proteins"/>
    <property type="evidence" value="ECO:0007669"/>
    <property type="project" value="UniProtKB-UniRule"/>
</dbReference>
<dbReference type="GO" id="GO:0006625">
    <property type="term" value="P:protein targeting to peroxisome"/>
    <property type="evidence" value="ECO:0000318"/>
    <property type="project" value="GO_Central"/>
</dbReference>
<dbReference type="CDD" id="cd19500">
    <property type="entry name" value="RecA-like_Lon"/>
    <property type="match status" value="1"/>
</dbReference>
<dbReference type="FunFam" id="1.20.5.5270:FF:000002">
    <property type="entry name" value="Lon protease homolog"/>
    <property type="match status" value="1"/>
</dbReference>
<dbReference type="FunFam" id="1.10.8.60:FF:000091">
    <property type="entry name" value="Lon protease homolog 2, peroxisomal"/>
    <property type="match status" value="1"/>
</dbReference>
<dbReference type="FunFam" id="1.20.58.1480:FF:000011">
    <property type="entry name" value="Lon protease homolog 2, peroxisomal"/>
    <property type="match status" value="1"/>
</dbReference>
<dbReference type="FunFam" id="2.30.130.40:FF:000011">
    <property type="entry name" value="Lon protease homolog 2, peroxisomal"/>
    <property type="match status" value="1"/>
</dbReference>
<dbReference type="FunFam" id="3.30.230.10:FF:000039">
    <property type="entry name" value="Lon protease homolog 2, peroxisomal"/>
    <property type="match status" value="1"/>
</dbReference>
<dbReference type="Gene3D" id="1.10.8.60">
    <property type="match status" value="1"/>
</dbReference>
<dbReference type="Gene3D" id="1.20.5.5270">
    <property type="match status" value="1"/>
</dbReference>
<dbReference type="Gene3D" id="1.20.58.1480">
    <property type="match status" value="1"/>
</dbReference>
<dbReference type="Gene3D" id="3.30.230.10">
    <property type="match status" value="1"/>
</dbReference>
<dbReference type="Gene3D" id="2.30.130.40">
    <property type="entry name" value="LON domain-like"/>
    <property type="match status" value="1"/>
</dbReference>
<dbReference type="Gene3D" id="3.40.50.300">
    <property type="entry name" value="P-loop containing nucleotide triphosphate hydrolases"/>
    <property type="match status" value="1"/>
</dbReference>
<dbReference type="HAMAP" id="MF_03121">
    <property type="entry name" value="lonp2_euk"/>
    <property type="match status" value="1"/>
</dbReference>
<dbReference type="InterPro" id="IPR003593">
    <property type="entry name" value="AAA+_ATPase"/>
</dbReference>
<dbReference type="InterPro" id="IPR003959">
    <property type="entry name" value="ATPase_AAA_core"/>
</dbReference>
<dbReference type="InterPro" id="IPR004815">
    <property type="entry name" value="Lon_bac/euk-typ"/>
</dbReference>
<dbReference type="InterPro" id="IPR054594">
    <property type="entry name" value="Lon_lid"/>
</dbReference>
<dbReference type="InterPro" id="IPR008269">
    <property type="entry name" value="Lon_proteolytic"/>
</dbReference>
<dbReference type="InterPro" id="IPR027065">
    <property type="entry name" value="Lon_Prtase"/>
</dbReference>
<dbReference type="InterPro" id="IPR003111">
    <property type="entry name" value="Lon_prtase_N"/>
</dbReference>
<dbReference type="InterPro" id="IPR046336">
    <property type="entry name" value="Lon_prtase_N_sf"/>
</dbReference>
<dbReference type="InterPro" id="IPR027501">
    <property type="entry name" value="Lonp2_euk"/>
</dbReference>
<dbReference type="InterPro" id="IPR027417">
    <property type="entry name" value="P-loop_NTPase"/>
</dbReference>
<dbReference type="InterPro" id="IPR015947">
    <property type="entry name" value="PUA-like_sf"/>
</dbReference>
<dbReference type="InterPro" id="IPR020568">
    <property type="entry name" value="Ribosomal_Su5_D2-typ_SF"/>
</dbReference>
<dbReference type="InterPro" id="IPR014721">
    <property type="entry name" value="Ribsml_uS5_D2-typ_fold_subgr"/>
</dbReference>
<dbReference type="PANTHER" id="PTHR10046">
    <property type="entry name" value="ATP DEPENDENT LON PROTEASE FAMILY MEMBER"/>
    <property type="match status" value="1"/>
</dbReference>
<dbReference type="Pfam" id="PF00004">
    <property type="entry name" value="AAA"/>
    <property type="match status" value="1"/>
</dbReference>
<dbReference type="Pfam" id="PF05362">
    <property type="entry name" value="Lon_C"/>
    <property type="match status" value="1"/>
</dbReference>
<dbReference type="Pfam" id="PF22667">
    <property type="entry name" value="Lon_lid"/>
    <property type="match status" value="1"/>
</dbReference>
<dbReference type="Pfam" id="PF02190">
    <property type="entry name" value="LON_substr_bdg"/>
    <property type="match status" value="1"/>
</dbReference>
<dbReference type="PIRSF" id="PIRSF001174">
    <property type="entry name" value="Lon_proteas"/>
    <property type="match status" value="1"/>
</dbReference>
<dbReference type="PRINTS" id="PR00830">
    <property type="entry name" value="ENDOLAPTASE"/>
</dbReference>
<dbReference type="SMART" id="SM00382">
    <property type="entry name" value="AAA"/>
    <property type="match status" value="1"/>
</dbReference>
<dbReference type="SMART" id="SM00464">
    <property type="entry name" value="LON"/>
    <property type="match status" value="1"/>
</dbReference>
<dbReference type="SUPFAM" id="SSF52540">
    <property type="entry name" value="P-loop containing nucleoside triphosphate hydrolases"/>
    <property type="match status" value="1"/>
</dbReference>
<dbReference type="SUPFAM" id="SSF88697">
    <property type="entry name" value="PUA domain-like"/>
    <property type="match status" value="1"/>
</dbReference>
<dbReference type="SUPFAM" id="SSF54211">
    <property type="entry name" value="Ribosomal protein S5 domain 2-like"/>
    <property type="match status" value="1"/>
</dbReference>
<dbReference type="PROSITE" id="PS51787">
    <property type="entry name" value="LON_N"/>
    <property type="match status" value="1"/>
</dbReference>
<dbReference type="PROSITE" id="PS51786">
    <property type="entry name" value="LON_PROTEOLYTIC"/>
    <property type="match status" value="1"/>
</dbReference>